<sequence length="301" mass="33444">MEDATEMSGGAEEFAEGSKINASKNQQDDGKMFIGGLSWDTSKKDLTEYLSRFGEVVDCTIKTDPVTGRSRGFGFVLFKDAASVEKVLELKEHKLDGKLIDPKRAKALKGKEPPKKVFVGGLSPDTSEEQIKEYFGAFGEIENIELPMDTKTNERRGFCFITYTDEEPVKKLLESRYHQIGSGKCEIKVAQPKEVYRQQQQQQKGGKSNASGGRGGGRGRGRGQGQNWNQGFNNYYDQGYGNYNSAYSDQSYSGYGGYDYSGYNYPNYGYGPGYTDYSGQQSTYGKASRGGGNHQNNYQPY</sequence>
<keyword id="KW-0963">Cytoplasm</keyword>
<keyword id="KW-0238">DNA-binding</keyword>
<keyword id="KW-0488">Methylation</keyword>
<keyword id="KW-0539">Nucleus</keyword>
<keyword id="KW-1185">Reference proteome</keyword>
<keyword id="KW-0677">Repeat</keyword>
<keyword id="KW-0694">RNA-binding</keyword>
<keyword id="KW-0804">Transcription</keyword>
<keyword id="KW-0805">Transcription regulation</keyword>
<organism>
    <name type="scientific">Gallus gallus</name>
    <name type="common">Chicken</name>
    <dbReference type="NCBI Taxonomy" id="9031"/>
    <lineage>
        <taxon>Eukaryota</taxon>
        <taxon>Metazoa</taxon>
        <taxon>Chordata</taxon>
        <taxon>Craniata</taxon>
        <taxon>Vertebrata</taxon>
        <taxon>Euteleostomi</taxon>
        <taxon>Archelosauria</taxon>
        <taxon>Archosauria</taxon>
        <taxon>Dinosauria</taxon>
        <taxon>Saurischia</taxon>
        <taxon>Theropoda</taxon>
        <taxon>Coelurosauria</taxon>
        <taxon>Aves</taxon>
        <taxon>Neognathae</taxon>
        <taxon>Galloanserae</taxon>
        <taxon>Galliformes</taxon>
        <taxon>Phasianidae</taxon>
        <taxon>Phasianinae</taxon>
        <taxon>Gallus</taxon>
    </lineage>
</organism>
<protein>
    <recommendedName>
        <fullName>Heterogeneous nuclear ribonucleoprotein D-like</fullName>
        <shortName>hnRNP D-like</shortName>
        <shortName>hnRNP DL</shortName>
    </recommendedName>
</protein>
<reference key="1">
    <citation type="journal article" date="2005" name="Genome Biol.">
        <title>Full-length cDNAs from chicken bursal lymphocytes to facilitate gene function analysis.</title>
        <authorList>
            <person name="Caldwell R.B."/>
            <person name="Kierzek A.M."/>
            <person name="Arakawa H."/>
            <person name="Bezzubov Y."/>
            <person name="Zaim J."/>
            <person name="Fiedler P."/>
            <person name="Kutter S."/>
            <person name="Blagodatski A."/>
            <person name="Kostovska D."/>
            <person name="Koter M."/>
            <person name="Plachy J."/>
            <person name="Carninci P."/>
            <person name="Hayashizaki Y."/>
            <person name="Buerstedde J.-M."/>
        </authorList>
    </citation>
    <scope>NUCLEOTIDE SEQUENCE [LARGE SCALE MRNA]</scope>
    <source>
        <strain>CB</strain>
        <tissue>Bursa of Fabricius</tissue>
    </source>
</reference>
<dbReference type="EMBL" id="AJ720912">
    <property type="protein sequence ID" value="CAG32571.1"/>
    <property type="molecule type" value="mRNA"/>
</dbReference>
<dbReference type="RefSeq" id="NP_001026313.1">
    <property type="nucleotide sequence ID" value="NM_001031142.2"/>
</dbReference>
<dbReference type="RefSeq" id="XP_015131753.1">
    <property type="nucleotide sequence ID" value="XM_015276267.4"/>
</dbReference>
<dbReference type="RefSeq" id="XP_040554901.1">
    <property type="nucleotide sequence ID" value="XM_040698967.2"/>
</dbReference>
<dbReference type="RefSeq" id="XP_046772090.1">
    <property type="nucleotide sequence ID" value="XM_046916134.1"/>
</dbReference>
<dbReference type="RefSeq" id="XP_046772091.1">
    <property type="nucleotide sequence ID" value="XM_046916135.1"/>
</dbReference>
<dbReference type="SMR" id="Q5ZI72"/>
<dbReference type="BioGRID" id="683263">
    <property type="interactions" value="1"/>
</dbReference>
<dbReference type="FunCoup" id="Q5ZI72">
    <property type="interactions" value="2972"/>
</dbReference>
<dbReference type="STRING" id="9031.ENSGALP00000052960"/>
<dbReference type="PaxDb" id="9031-ENSGALP00000037222"/>
<dbReference type="GeneID" id="422601"/>
<dbReference type="KEGG" id="gga:422601"/>
<dbReference type="CTD" id="9987"/>
<dbReference type="VEuPathDB" id="HostDB:geneid_422601"/>
<dbReference type="eggNOG" id="KOG0118">
    <property type="taxonomic scope" value="Eukaryota"/>
</dbReference>
<dbReference type="HOGENOM" id="CLU_012062_1_1_1"/>
<dbReference type="InParanoid" id="Q5ZI72"/>
<dbReference type="OMA" id="QVDTEMN"/>
<dbReference type="OrthoDB" id="1875751at2759"/>
<dbReference type="PhylomeDB" id="Q5ZI72"/>
<dbReference type="PRO" id="PR:Q5ZI72"/>
<dbReference type="Proteomes" id="UP000000539">
    <property type="component" value="Chromosome 4"/>
</dbReference>
<dbReference type="Bgee" id="ENSGALG00000023199">
    <property type="expression patterns" value="Expressed in ovary and 13 other cell types or tissues"/>
</dbReference>
<dbReference type="GO" id="GO:0000785">
    <property type="term" value="C:chromatin"/>
    <property type="evidence" value="ECO:0000318"/>
    <property type="project" value="GO_Central"/>
</dbReference>
<dbReference type="GO" id="GO:0005737">
    <property type="term" value="C:cytoplasm"/>
    <property type="evidence" value="ECO:0007669"/>
    <property type="project" value="UniProtKB-SubCell"/>
</dbReference>
<dbReference type="GO" id="GO:0005654">
    <property type="term" value="C:nucleoplasm"/>
    <property type="evidence" value="ECO:0000318"/>
    <property type="project" value="GO_Central"/>
</dbReference>
<dbReference type="GO" id="GO:0003677">
    <property type="term" value="F:DNA binding"/>
    <property type="evidence" value="ECO:0007669"/>
    <property type="project" value="UniProtKB-KW"/>
</dbReference>
<dbReference type="GO" id="GO:0003723">
    <property type="term" value="F:RNA binding"/>
    <property type="evidence" value="ECO:0000318"/>
    <property type="project" value="GO_Central"/>
</dbReference>
<dbReference type="GO" id="GO:0010468">
    <property type="term" value="P:regulation of gene expression"/>
    <property type="evidence" value="ECO:0000318"/>
    <property type="project" value="GO_Central"/>
</dbReference>
<dbReference type="CDD" id="cd12758">
    <property type="entry name" value="RRM1_hnRPDL"/>
    <property type="match status" value="1"/>
</dbReference>
<dbReference type="CDD" id="cd12585">
    <property type="entry name" value="RRM2_hnRPDL"/>
    <property type="match status" value="1"/>
</dbReference>
<dbReference type="FunFam" id="3.30.70.330:FF:000220">
    <property type="entry name" value="Heterogeneous nuclear ribonucleoprotein D-like protein"/>
    <property type="match status" value="1"/>
</dbReference>
<dbReference type="FunFam" id="3.30.70.330:FF:000030">
    <property type="entry name" value="Heterogeneous nuclear ribonucleoprotein d0 isoform"/>
    <property type="match status" value="1"/>
</dbReference>
<dbReference type="Gene3D" id="3.30.70.330">
    <property type="match status" value="2"/>
</dbReference>
<dbReference type="InterPro" id="IPR034847">
    <property type="entry name" value="hnRPDL_RRM1"/>
</dbReference>
<dbReference type="InterPro" id="IPR012677">
    <property type="entry name" value="Nucleotide-bd_a/b_plait_sf"/>
</dbReference>
<dbReference type="InterPro" id="IPR035979">
    <property type="entry name" value="RBD_domain_sf"/>
</dbReference>
<dbReference type="InterPro" id="IPR000504">
    <property type="entry name" value="RRM_dom"/>
</dbReference>
<dbReference type="PANTHER" id="PTHR48033:SF2">
    <property type="entry name" value="HETEROGENEOUS NUCLEAR RIBONUCLEOPROTEIN D-LIKE"/>
    <property type="match status" value="1"/>
</dbReference>
<dbReference type="PANTHER" id="PTHR48033">
    <property type="entry name" value="RNA-BINDING (RRM/RBD/RNP MOTIFS) FAMILY PROTEIN"/>
    <property type="match status" value="1"/>
</dbReference>
<dbReference type="Pfam" id="PF00076">
    <property type="entry name" value="RRM_1"/>
    <property type="match status" value="2"/>
</dbReference>
<dbReference type="SMART" id="SM00360">
    <property type="entry name" value="RRM"/>
    <property type="match status" value="2"/>
</dbReference>
<dbReference type="SUPFAM" id="SSF54928">
    <property type="entry name" value="RNA-binding domain, RBD"/>
    <property type="match status" value="2"/>
</dbReference>
<dbReference type="PROSITE" id="PS50102">
    <property type="entry name" value="RRM"/>
    <property type="match status" value="2"/>
</dbReference>
<gene>
    <name type="primary">HNRNPDL</name>
    <name type="synonym">HNRPDL</name>
    <name type="ORF">RCJMB04_29l7</name>
</gene>
<evidence type="ECO:0000250" key="1"/>
<evidence type="ECO:0000250" key="2">
    <source>
        <dbReference type="UniProtKB" id="O14979"/>
    </source>
</evidence>
<evidence type="ECO:0000255" key="3">
    <source>
        <dbReference type="PROSITE-ProRule" id="PRU00176"/>
    </source>
</evidence>
<evidence type="ECO:0000256" key="4">
    <source>
        <dbReference type="SAM" id="MobiDB-lite"/>
    </source>
</evidence>
<accession>Q5ZI72</accession>
<comment type="function">
    <text evidence="1">Acts as a transcriptional regulator. Binds DNA and RNA (By similarity).</text>
</comment>
<comment type="subcellular location">
    <subcellularLocation>
        <location evidence="2">Nucleus</location>
    </subcellularLocation>
    <subcellularLocation>
        <location evidence="2">Cytoplasm</location>
    </subcellularLocation>
    <text evidence="2">Shuttles between the nucleus and the cytoplasm in a TNPO1-dependent manner.</text>
</comment>
<feature type="chain" id="PRO_0000287242" description="Heterogeneous nuclear ribonucleoprotein D-like">
    <location>
        <begin position="1"/>
        <end position="301"/>
    </location>
</feature>
<feature type="domain" description="RRM 1" evidence="3">
    <location>
        <begin position="30"/>
        <end position="112"/>
    </location>
</feature>
<feature type="domain" description="RRM 2" evidence="3">
    <location>
        <begin position="115"/>
        <end position="194"/>
    </location>
</feature>
<feature type="region of interest" description="Disordered" evidence="4">
    <location>
        <begin position="1"/>
        <end position="29"/>
    </location>
</feature>
<feature type="region of interest" description="Disordered" evidence="4">
    <location>
        <begin position="194"/>
        <end position="230"/>
    </location>
</feature>
<feature type="region of interest" description="Disordered" evidence="4">
    <location>
        <begin position="269"/>
        <end position="301"/>
    </location>
</feature>
<feature type="compositionally biased region" description="Gly residues" evidence="4">
    <location>
        <begin position="212"/>
        <end position="224"/>
    </location>
</feature>
<proteinExistence type="evidence at transcript level"/>
<name>HNRDL_CHICK</name>